<reference key="1">
    <citation type="submission" date="2009-03" db="EMBL/GenBank/DDBJ databases">
        <title>Complete genome sequence of Edwardsiella ictaluri 93-146.</title>
        <authorList>
            <person name="Williams M.L."/>
            <person name="Gillaspy A.F."/>
            <person name="Dyer D.W."/>
            <person name="Thune R.L."/>
            <person name="Waldbieser G.C."/>
            <person name="Schuster S.C."/>
            <person name="Gipson J."/>
            <person name="Zaitshik J."/>
            <person name="Landry C."/>
            <person name="Lawrence M.L."/>
        </authorList>
    </citation>
    <scope>NUCLEOTIDE SEQUENCE [LARGE SCALE GENOMIC DNA]</scope>
    <source>
        <strain>93-146</strain>
    </source>
</reference>
<sequence length="1026" mass="110510">MSGFALFINRPVATSLLALAITLVGLLGLRLLPVAPLPQVDFPVIMVSASLPGASAETMAASVAMPLERALGRIAGVNEMTSSSSLGTTRIILQFNLDRNIDGAARDVQAALNAAQSLLPSGMPSRPSYRKANPSDAPIAILTLTSAQYSQGDLYDLASTRLAQKIAQINGVGDVSVSGSSLPAVRIDLNPDALFNQGTSLDTVRQAIASANVRRPLGAVADDGRRWQVQSNDALMTAQEYRPLIIRYRDGAPLRLQDVARISDGVEDVRNAGMSNGQPAILIMIRRSADANIIETVDRLRSDLPALQALLPGGVSLDIAQDRTPTIRASLREVEQSLAIAIALVILVVFLFLRSARATLIPAVTVPVSLIGTCAAIYLCGFSLNNLSLMALTIASGFVVDDAIVVLENIARHIEDGLSPHRAALAGVREVGFTVFSISLSLAAVFIPLLFMGGIPGRLFHEFAITLSASIAISLLIALTLTPMMCARLLRPRHTDGGMRPTALRRLSALLQRGYALSLNWTLDHARWVLLTLLAVIGLNIWLYISIPKTFFPQQDTGRLMGFIQADQSISFQAMRGKLQDFMHIVRADPDVDNVTGFTGGTRVNSGMMFIALKPLGERKQDAQQVIARLRTRLSHEPGANLFLMAVQDIRAGGRQGNASYQYTLLSDDLAVLRHWEPQVRKALAALPQLTDVSTDQQDKGTEMLLTYDRPAMARLGIKVSEVNTLLSNAFGQRQISTLYQPLNQYHVVMEVDPRYAQDERALDKMFIINQAGQPIPLSGFASWLPANAPLSVNHQGLSAAATISFNLPPGGSLSDASDAIAHAMTALGTPPSLRGTFAGTALLFQQAQSSQLLLILAAIATVYIVLGILYESYIHPLTILSTLPSAGVGALLALMLFNAPFSLIALIGIMLLIGLVKKNAILLVDFALTAEREQHLSARDAIYQACLLRFRPILMTTLAALFGALPLAFSYGDGAELRQPLGITIVGGLLVSQILTLYTTPVVYLYMEKLRARFSRQKALPPLAY</sequence>
<accession>C5BHN3</accession>
<evidence type="ECO:0000255" key="1">
    <source>
        <dbReference type="HAMAP-Rule" id="MF_01424"/>
    </source>
</evidence>
<proteinExistence type="inferred from homology"/>
<feature type="chain" id="PRO_0000414033" description="Multidrug resistance protein MdtC">
    <location>
        <begin position="1"/>
        <end position="1026"/>
    </location>
</feature>
<feature type="transmembrane region" description="Helical" evidence="1">
    <location>
        <begin position="16"/>
        <end position="36"/>
    </location>
</feature>
<feature type="transmembrane region" description="Helical" evidence="1">
    <location>
        <begin position="333"/>
        <end position="353"/>
    </location>
</feature>
<feature type="transmembrane region" description="Helical" evidence="1">
    <location>
        <begin position="360"/>
        <end position="380"/>
    </location>
</feature>
<feature type="transmembrane region" description="Helical" evidence="1">
    <location>
        <begin position="387"/>
        <end position="407"/>
    </location>
</feature>
<feature type="transmembrane region" description="Helical" evidence="1">
    <location>
        <begin position="435"/>
        <end position="455"/>
    </location>
</feature>
<feature type="transmembrane region" description="Helical" evidence="1">
    <location>
        <begin position="459"/>
        <end position="479"/>
    </location>
</feature>
<feature type="transmembrane region" description="Helical" evidence="1">
    <location>
        <begin position="528"/>
        <end position="548"/>
    </location>
</feature>
<feature type="transmembrane region" description="Helical" evidence="1">
    <location>
        <begin position="853"/>
        <end position="873"/>
    </location>
</feature>
<feature type="transmembrane region" description="Helical" evidence="1">
    <location>
        <begin position="897"/>
        <end position="917"/>
    </location>
</feature>
<feature type="transmembrane region" description="Helical" evidence="1">
    <location>
        <begin position="953"/>
        <end position="973"/>
    </location>
</feature>
<feature type="transmembrane region" description="Helical" evidence="1">
    <location>
        <begin position="984"/>
        <end position="1004"/>
    </location>
</feature>
<protein>
    <recommendedName>
        <fullName evidence="1">Multidrug resistance protein MdtC</fullName>
    </recommendedName>
    <alternativeName>
        <fullName evidence="1">Multidrug transporter MdtC</fullName>
    </alternativeName>
</protein>
<organism>
    <name type="scientific">Edwardsiella ictaluri (strain 93-146)</name>
    <dbReference type="NCBI Taxonomy" id="634503"/>
    <lineage>
        <taxon>Bacteria</taxon>
        <taxon>Pseudomonadati</taxon>
        <taxon>Pseudomonadota</taxon>
        <taxon>Gammaproteobacteria</taxon>
        <taxon>Enterobacterales</taxon>
        <taxon>Hafniaceae</taxon>
        <taxon>Edwardsiella</taxon>
    </lineage>
</organism>
<name>MDTC_EDWI9</name>
<comment type="subunit">
    <text evidence="1">Part of a tripartite efflux system composed of MdtA, MdtB and MdtC. MdtC forms a heteromultimer with MdtB.</text>
</comment>
<comment type="subcellular location">
    <subcellularLocation>
        <location evidence="1">Cell inner membrane</location>
        <topology evidence="1">Multi-pass membrane protein</topology>
    </subcellularLocation>
</comment>
<comment type="similarity">
    <text evidence="1">Belongs to the resistance-nodulation-cell division (RND) (TC 2.A.6) family. MdtC subfamily.</text>
</comment>
<keyword id="KW-0997">Cell inner membrane</keyword>
<keyword id="KW-1003">Cell membrane</keyword>
<keyword id="KW-0472">Membrane</keyword>
<keyword id="KW-0812">Transmembrane</keyword>
<keyword id="KW-1133">Transmembrane helix</keyword>
<keyword id="KW-0813">Transport</keyword>
<gene>
    <name evidence="1" type="primary">mdtC</name>
    <name type="ordered locus">NT01EI_1169</name>
</gene>
<dbReference type="EMBL" id="CP001600">
    <property type="protein sequence ID" value="ACR68377.1"/>
    <property type="molecule type" value="Genomic_DNA"/>
</dbReference>
<dbReference type="RefSeq" id="WP_015870552.1">
    <property type="nucleotide sequence ID" value="NZ_CP169062.1"/>
</dbReference>
<dbReference type="SMR" id="C5BHN3"/>
<dbReference type="STRING" id="67780.B6E78_16165"/>
<dbReference type="GeneID" id="69538196"/>
<dbReference type="KEGG" id="eic:NT01EI_1169"/>
<dbReference type="PATRIC" id="fig|634503.3.peg.1059"/>
<dbReference type="HOGENOM" id="CLU_002755_1_2_6"/>
<dbReference type="OrthoDB" id="9757904at2"/>
<dbReference type="Proteomes" id="UP000001485">
    <property type="component" value="Chromosome"/>
</dbReference>
<dbReference type="GO" id="GO:0005886">
    <property type="term" value="C:plasma membrane"/>
    <property type="evidence" value="ECO:0007669"/>
    <property type="project" value="UniProtKB-SubCell"/>
</dbReference>
<dbReference type="GO" id="GO:0042910">
    <property type="term" value="F:xenobiotic transmembrane transporter activity"/>
    <property type="evidence" value="ECO:0007669"/>
    <property type="project" value="TreeGrafter"/>
</dbReference>
<dbReference type="FunFam" id="1.20.1640.10:FF:000001">
    <property type="entry name" value="Efflux pump membrane transporter"/>
    <property type="match status" value="1"/>
</dbReference>
<dbReference type="FunFam" id="3.30.70.1430:FF:000001">
    <property type="entry name" value="Efflux pump membrane transporter"/>
    <property type="match status" value="1"/>
</dbReference>
<dbReference type="Gene3D" id="3.30.70.1430">
    <property type="entry name" value="Multidrug efflux transporter AcrB pore domain"/>
    <property type="match status" value="2"/>
</dbReference>
<dbReference type="Gene3D" id="3.30.70.1440">
    <property type="entry name" value="Multidrug efflux transporter AcrB pore domain"/>
    <property type="match status" value="1"/>
</dbReference>
<dbReference type="Gene3D" id="3.30.70.1320">
    <property type="entry name" value="Multidrug efflux transporter AcrB pore domain like"/>
    <property type="match status" value="1"/>
</dbReference>
<dbReference type="Gene3D" id="3.30.2090.10">
    <property type="entry name" value="Multidrug efflux transporter AcrB TolC docking domain, DN and DC subdomains"/>
    <property type="match status" value="2"/>
</dbReference>
<dbReference type="Gene3D" id="1.20.1640.10">
    <property type="entry name" value="Multidrug efflux transporter AcrB transmembrane domain"/>
    <property type="match status" value="2"/>
</dbReference>
<dbReference type="HAMAP" id="MF_01424">
    <property type="entry name" value="MdtC"/>
    <property type="match status" value="1"/>
</dbReference>
<dbReference type="InterPro" id="IPR027463">
    <property type="entry name" value="AcrB_DN_DC_subdom"/>
</dbReference>
<dbReference type="InterPro" id="IPR001036">
    <property type="entry name" value="Acrflvin-R"/>
</dbReference>
<dbReference type="InterPro" id="IPR023931">
    <property type="entry name" value="Multidrug-R_MdtC"/>
</dbReference>
<dbReference type="NCBIfam" id="NF007905">
    <property type="entry name" value="PRK10614.1"/>
    <property type="match status" value="1"/>
</dbReference>
<dbReference type="NCBIfam" id="NF033617">
    <property type="entry name" value="RND_permease_2"/>
    <property type="match status" value="1"/>
</dbReference>
<dbReference type="PANTHER" id="PTHR32063">
    <property type="match status" value="1"/>
</dbReference>
<dbReference type="PANTHER" id="PTHR32063:SF34">
    <property type="entry name" value="MULTIDRUG RESISTANCE PROTEIN MDTC"/>
    <property type="match status" value="1"/>
</dbReference>
<dbReference type="Pfam" id="PF00873">
    <property type="entry name" value="ACR_tran"/>
    <property type="match status" value="1"/>
</dbReference>
<dbReference type="PRINTS" id="PR00702">
    <property type="entry name" value="ACRIFLAVINRP"/>
</dbReference>
<dbReference type="SUPFAM" id="SSF82693">
    <property type="entry name" value="Multidrug efflux transporter AcrB pore domain, PN1, PN2, PC1 and PC2 subdomains"/>
    <property type="match status" value="4"/>
</dbReference>
<dbReference type="SUPFAM" id="SSF82714">
    <property type="entry name" value="Multidrug efflux transporter AcrB TolC docking domain, DN and DC subdomains"/>
    <property type="match status" value="2"/>
</dbReference>
<dbReference type="SUPFAM" id="SSF82866">
    <property type="entry name" value="Multidrug efflux transporter AcrB transmembrane domain"/>
    <property type="match status" value="2"/>
</dbReference>